<dbReference type="EC" id="2.5.1.19" evidence="1"/>
<dbReference type="EMBL" id="CP000747">
    <property type="protein sequence ID" value="ACG76602.1"/>
    <property type="molecule type" value="Genomic_DNA"/>
</dbReference>
<dbReference type="RefSeq" id="WP_012520750.1">
    <property type="nucleotide sequence ID" value="NC_011144.1"/>
</dbReference>
<dbReference type="SMR" id="B4RCK3"/>
<dbReference type="STRING" id="450851.PHZ_c0188"/>
<dbReference type="KEGG" id="pzu:PHZ_c0188"/>
<dbReference type="eggNOG" id="COG0128">
    <property type="taxonomic scope" value="Bacteria"/>
</dbReference>
<dbReference type="HOGENOM" id="CLU_024321_0_1_5"/>
<dbReference type="OrthoDB" id="9809920at2"/>
<dbReference type="UniPathway" id="UPA00053">
    <property type="reaction ID" value="UER00089"/>
</dbReference>
<dbReference type="Proteomes" id="UP000001868">
    <property type="component" value="Chromosome"/>
</dbReference>
<dbReference type="GO" id="GO:0005737">
    <property type="term" value="C:cytoplasm"/>
    <property type="evidence" value="ECO:0007669"/>
    <property type="project" value="UniProtKB-SubCell"/>
</dbReference>
<dbReference type="GO" id="GO:0003866">
    <property type="term" value="F:3-phosphoshikimate 1-carboxyvinyltransferase activity"/>
    <property type="evidence" value="ECO:0007669"/>
    <property type="project" value="UniProtKB-UniRule"/>
</dbReference>
<dbReference type="GO" id="GO:0008652">
    <property type="term" value="P:amino acid biosynthetic process"/>
    <property type="evidence" value="ECO:0007669"/>
    <property type="project" value="UniProtKB-KW"/>
</dbReference>
<dbReference type="GO" id="GO:0009073">
    <property type="term" value="P:aromatic amino acid family biosynthetic process"/>
    <property type="evidence" value="ECO:0007669"/>
    <property type="project" value="UniProtKB-KW"/>
</dbReference>
<dbReference type="GO" id="GO:0009423">
    <property type="term" value="P:chorismate biosynthetic process"/>
    <property type="evidence" value="ECO:0007669"/>
    <property type="project" value="UniProtKB-UniRule"/>
</dbReference>
<dbReference type="CDD" id="cd01556">
    <property type="entry name" value="EPSP_synthase"/>
    <property type="match status" value="1"/>
</dbReference>
<dbReference type="FunFam" id="3.65.10.10:FF:000005">
    <property type="entry name" value="3-phosphoshikimate 1-carboxyvinyltransferase"/>
    <property type="match status" value="1"/>
</dbReference>
<dbReference type="Gene3D" id="3.65.10.10">
    <property type="entry name" value="Enolpyruvate transferase domain"/>
    <property type="match status" value="2"/>
</dbReference>
<dbReference type="HAMAP" id="MF_00210">
    <property type="entry name" value="EPSP_synth"/>
    <property type="match status" value="1"/>
</dbReference>
<dbReference type="InterPro" id="IPR001986">
    <property type="entry name" value="Enolpyruvate_Tfrase_dom"/>
</dbReference>
<dbReference type="InterPro" id="IPR036968">
    <property type="entry name" value="Enolpyruvate_Tfrase_sf"/>
</dbReference>
<dbReference type="InterPro" id="IPR006264">
    <property type="entry name" value="EPSP_synthase"/>
</dbReference>
<dbReference type="InterPro" id="IPR023193">
    <property type="entry name" value="EPSP_synthase_CS"/>
</dbReference>
<dbReference type="InterPro" id="IPR013792">
    <property type="entry name" value="RNA3'P_cycl/enolpyr_Trfase_a/b"/>
</dbReference>
<dbReference type="NCBIfam" id="TIGR01356">
    <property type="entry name" value="aroA"/>
    <property type="match status" value="1"/>
</dbReference>
<dbReference type="PANTHER" id="PTHR21090">
    <property type="entry name" value="AROM/DEHYDROQUINATE SYNTHASE"/>
    <property type="match status" value="1"/>
</dbReference>
<dbReference type="PANTHER" id="PTHR21090:SF5">
    <property type="entry name" value="PENTAFUNCTIONAL AROM POLYPEPTIDE"/>
    <property type="match status" value="1"/>
</dbReference>
<dbReference type="Pfam" id="PF00275">
    <property type="entry name" value="EPSP_synthase"/>
    <property type="match status" value="1"/>
</dbReference>
<dbReference type="PIRSF" id="PIRSF000505">
    <property type="entry name" value="EPSPS"/>
    <property type="match status" value="1"/>
</dbReference>
<dbReference type="SUPFAM" id="SSF55205">
    <property type="entry name" value="EPT/RTPC-like"/>
    <property type="match status" value="1"/>
</dbReference>
<dbReference type="PROSITE" id="PS00104">
    <property type="entry name" value="EPSP_SYNTHASE_1"/>
    <property type="match status" value="1"/>
</dbReference>
<dbReference type="PROSITE" id="PS00885">
    <property type="entry name" value="EPSP_SYNTHASE_2"/>
    <property type="match status" value="1"/>
</dbReference>
<name>AROA_PHEZH</name>
<evidence type="ECO:0000255" key="1">
    <source>
        <dbReference type="HAMAP-Rule" id="MF_00210"/>
    </source>
</evidence>
<organism>
    <name type="scientific">Phenylobacterium zucineum (strain HLK1)</name>
    <dbReference type="NCBI Taxonomy" id="450851"/>
    <lineage>
        <taxon>Bacteria</taxon>
        <taxon>Pseudomonadati</taxon>
        <taxon>Pseudomonadota</taxon>
        <taxon>Alphaproteobacteria</taxon>
        <taxon>Caulobacterales</taxon>
        <taxon>Caulobacteraceae</taxon>
        <taxon>Phenylobacterium</taxon>
    </lineage>
</organism>
<reference key="1">
    <citation type="journal article" date="2008" name="BMC Genomics">
        <title>Complete genome of Phenylobacterium zucineum - a novel facultative intracellular bacterium isolated from human erythroleukemia cell line K562.</title>
        <authorList>
            <person name="Luo Y."/>
            <person name="Xu X."/>
            <person name="Ding Z."/>
            <person name="Liu Z."/>
            <person name="Zhang B."/>
            <person name="Yan Z."/>
            <person name="Sun J."/>
            <person name="Hu S."/>
            <person name="Hu X."/>
        </authorList>
    </citation>
    <scope>NUCLEOTIDE SEQUENCE [LARGE SCALE GENOMIC DNA]</scope>
    <source>
        <strain>HLK1</strain>
    </source>
</reference>
<gene>
    <name evidence="1" type="primary">aroA</name>
    <name type="ordered locus">PHZ_c0188</name>
</gene>
<accession>B4RCK3</accession>
<sequence>MTAAHLTARRAGSLKGTVRAPGDKSISHRALILGALASGLTEVDGLLESDDVRRTAAAMQAFGAGVIRTGEGAWRVEGKGGFAEPGDVIDCGNAGTGVRLIMGAAAGFDLAATFTGDSSLRGRPMNRVLKPLGEMGASWICRAGGRLPLTLKGGSLKRIAYRLPEPSAQVKSAVLLAGLSADGGAEVFEAEATRDHTERMLRGFGAEVDVTEESAGRRIVLPGGQALKGTRIRVPGDPSSAAFPLVAALVTPGSQVTVEGMLLNPLRIGLLETLGDMGADLSVTNVRDEGGETVADVTARHSALEGVETPPERAPSMIDEYPILAVAAAFASGRTVMRGIGEMRVKESDRIALMAAGLAACGVEVEEEPEGMIVTGRGGAVRGGGRITTHGDHRIAMSHLVLGMAAEEPVSVDEPGMIATSFPGFVEMMRGLGADVGADVGGDVGADSPVGA</sequence>
<proteinExistence type="inferred from homology"/>
<feature type="chain" id="PRO_1000099738" description="3-phosphoshikimate 1-carboxyvinyltransferase">
    <location>
        <begin position="1"/>
        <end position="452"/>
    </location>
</feature>
<feature type="active site" description="Proton acceptor" evidence="1">
    <location>
        <position position="319"/>
    </location>
</feature>
<feature type="binding site" evidence="1">
    <location>
        <position position="24"/>
    </location>
    <ligand>
        <name>3-phosphoshikimate</name>
        <dbReference type="ChEBI" id="CHEBI:145989"/>
    </ligand>
</feature>
<feature type="binding site" evidence="1">
    <location>
        <position position="24"/>
    </location>
    <ligand>
        <name>phosphoenolpyruvate</name>
        <dbReference type="ChEBI" id="CHEBI:58702"/>
    </ligand>
</feature>
<feature type="binding site" evidence="1">
    <location>
        <position position="25"/>
    </location>
    <ligand>
        <name>3-phosphoshikimate</name>
        <dbReference type="ChEBI" id="CHEBI:145989"/>
    </ligand>
</feature>
<feature type="binding site" evidence="1">
    <location>
        <position position="29"/>
    </location>
    <ligand>
        <name>3-phosphoshikimate</name>
        <dbReference type="ChEBI" id="CHEBI:145989"/>
    </ligand>
</feature>
<feature type="binding site" evidence="1">
    <location>
        <position position="95"/>
    </location>
    <ligand>
        <name>phosphoenolpyruvate</name>
        <dbReference type="ChEBI" id="CHEBI:58702"/>
    </ligand>
</feature>
<feature type="binding site" evidence="1">
    <location>
        <position position="123"/>
    </location>
    <ligand>
        <name>phosphoenolpyruvate</name>
        <dbReference type="ChEBI" id="CHEBI:58702"/>
    </ligand>
</feature>
<feature type="binding site" evidence="1">
    <location>
        <position position="167"/>
    </location>
    <ligand>
        <name>3-phosphoshikimate</name>
        <dbReference type="ChEBI" id="CHEBI:145989"/>
    </ligand>
</feature>
<feature type="binding site" evidence="1">
    <location>
        <position position="169"/>
    </location>
    <ligand>
        <name>3-phosphoshikimate</name>
        <dbReference type="ChEBI" id="CHEBI:145989"/>
    </ligand>
</feature>
<feature type="binding site" evidence="1">
    <location>
        <position position="169"/>
    </location>
    <ligand>
        <name>phosphoenolpyruvate</name>
        <dbReference type="ChEBI" id="CHEBI:58702"/>
    </ligand>
</feature>
<feature type="binding site" evidence="1">
    <location>
        <position position="319"/>
    </location>
    <ligand>
        <name>3-phosphoshikimate</name>
        <dbReference type="ChEBI" id="CHEBI:145989"/>
    </ligand>
</feature>
<feature type="binding site" evidence="1">
    <location>
        <position position="346"/>
    </location>
    <ligand>
        <name>3-phosphoshikimate</name>
        <dbReference type="ChEBI" id="CHEBI:145989"/>
    </ligand>
</feature>
<feature type="binding site" evidence="1">
    <location>
        <position position="350"/>
    </location>
    <ligand>
        <name>phosphoenolpyruvate</name>
        <dbReference type="ChEBI" id="CHEBI:58702"/>
    </ligand>
</feature>
<feature type="binding site" evidence="1">
    <location>
        <position position="394"/>
    </location>
    <ligand>
        <name>phosphoenolpyruvate</name>
        <dbReference type="ChEBI" id="CHEBI:58702"/>
    </ligand>
</feature>
<keyword id="KW-0028">Amino-acid biosynthesis</keyword>
<keyword id="KW-0057">Aromatic amino acid biosynthesis</keyword>
<keyword id="KW-0963">Cytoplasm</keyword>
<keyword id="KW-1185">Reference proteome</keyword>
<keyword id="KW-0808">Transferase</keyword>
<protein>
    <recommendedName>
        <fullName evidence="1">3-phosphoshikimate 1-carboxyvinyltransferase</fullName>
        <ecNumber evidence="1">2.5.1.19</ecNumber>
    </recommendedName>
    <alternativeName>
        <fullName evidence="1">5-enolpyruvylshikimate-3-phosphate synthase</fullName>
        <shortName evidence="1">EPSP synthase</shortName>
        <shortName evidence="1">EPSPS</shortName>
    </alternativeName>
</protein>
<comment type="function">
    <text evidence="1">Catalyzes the transfer of the enolpyruvyl moiety of phosphoenolpyruvate (PEP) to the 5-hydroxyl of shikimate-3-phosphate (S3P) to produce enolpyruvyl shikimate-3-phosphate and inorganic phosphate.</text>
</comment>
<comment type="catalytic activity">
    <reaction evidence="1">
        <text>3-phosphoshikimate + phosphoenolpyruvate = 5-O-(1-carboxyvinyl)-3-phosphoshikimate + phosphate</text>
        <dbReference type="Rhea" id="RHEA:21256"/>
        <dbReference type="ChEBI" id="CHEBI:43474"/>
        <dbReference type="ChEBI" id="CHEBI:57701"/>
        <dbReference type="ChEBI" id="CHEBI:58702"/>
        <dbReference type="ChEBI" id="CHEBI:145989"/>
        <dbReference type="EC" id="2.5.1.19"/>
    </reaction>
    <physiologicalReaction direction="left-to-right" evidence="1">
        <dbReference type="Rhea" id="RHEA:21257"/>
    </physiologicalReaction>
</comment>
<comment type="pathway">
    <text evidence="1">Metabolic intermediate biosynthesis; chorismate biosynthesis; chorismate from D-erythrose 4-phosphate and phosphoenolpyruvate: step 6/7.</text>
</comment>
<comment type="subunit">
    <text evidence="1">Monomer.</text>
</comment>
<comment type="subcellular location">
    <subcellularLocation>
        <location evidence="1">Cytoplasm</location>
    </subcellularLocation>
</comment>
<comment type="similarity">
    <text evidence="1">Belongs to the EPSP synthase family.</text>
</comment>